<proteinExistence type="evidence at protein level"/>
<name>COX5B_VULVU</name>
<accession>Q710D6</accession>
<evidence type="ECO:0000250" key="1">
    <source>
        <dbReference type="UniProtKB" id="P00428"/>
    </source>
</evidence>
<evidence type="ECO:0000250" key="2">
    <source>
        <dbReference type="UniProtKB" id="P19536"/>
    </source>
</evidence>
<evidence type="ECO:0000255" key="3"/>
<evidence type="ECO:0000255" key="4">
    <source>
        <dbReference type="PROSITE-ProRule" id="PRU00692"/>
    </source>
</evidence>
<evidence type="ECO:0000269" key="5">
    <source>
    </source>
</evidence>
<evidence type="ECO:0000269" key="6">
    <source>
    </source>
</evidence>
<evidence type="ECO:0000303" key="7">
    <source>
    </source>
</evidence>
<evidence type="ECO:0000305" key="8"/>
<evidence type="ECO:0000312" key="9">
    <source>
        <dbReference type="EMBL" id="CAD19164.1"/>
    </source>
</evidence>
<dbReference type="EMBL" id="AJ421970">
    <property type="protein sequence ID" value="CAD19164.1"/>
    <property type="molecule type" value="mRNA"/>
</dbReference>
<dbReference type="SMR" id="Q710D6"/>
<dbReference type="STRING" id="9627.ENSVVUP00000040325"/>
<dbReference type="Ensembl" id="ENSVVUT00000052829">
    <property type="protein sequence ID" value="ENSVVUP00000040325"/>
    <property type="gene ID" value="ENSVVUG00000028808"/>
</dbReference>
<dbReference type="OMA" id="HVNFMVI"/>
<dbReference type="Proteomes" id="UP000286640">
    <property type="component" value="Unplaced"/>
</dbReference>
<dbReference type="GO" id="GO:0005743">
    <property type="term" value="C:mitochondrial inner membrane"/>
    <property type="evidence" value="ECO:0007669"/>
    <property type="project" value="UniProtKB-SubCell"/>
</dbReference>
<dbReference type="GO" id="GO:0045277">
    <property type="term" value="C:respiratory chain complex IV"/>
    <property type="evidence" value="ECO:0007669"/>
    <property type="project" value="InterPro"/>
</dbReference>
<dbReference type="GO" id="GO:0046872">
    <property type="term" value="F:metal ion binding"/>
    <property type="evidence" value="ECO:0007669"/>
    <property type="project" value="UniProtKB-KW"/>
</dbReference>
<dbReference type="GO" id="GO:0006123">
    <property type="term" value="P:mitochondrial electron transport, cytochrome c to oxygen"/>
    <property type="evidence" value="ECO:0007669"/>
    <property type="project" value="InterPro"/>
</dbReference>
<dbReference type="CDD" id="cd00924">
    <property type="entry name" value="Cyt_c_Oxidase_Vb"/>
    <property type="match status" value="1"/>
</dbReference>
<dbReference type="FunFam" id="2.60.11.10:FF:000001">
    <property type="entry name" value="Cytochrome c oxidase subunit 5B, mitochondrial"/>
    <property type="match status" value="1"/>
</dbReference>
<dbReference type="Gene3D" id="2.60.11.10">
    <property type="entry name" value="Cytochrome c oxidase, subunit Vb"/>
    <property type="match status" value="1"/>
</dbReference>
<dbReference type="InterPro" id="IPR002124">
    <property type="entry name" value="Cyt_c_oxidase_su5b"/>
</dbReference>
<dbReference type="InterPro" id="IPR036972">
    <property type="entry name" value="Cyt_c_oxidase_su5b_sf"/>
</dbReference>
<dbReference type="PANTHER" id="PTHR10122">
    <property type="entry name" value="CYTOCHROME C OXIDASE SUBUNIT 5B, MITOCHONDRIAL"/>
    <property type="match status" value="1"/>
</dbReference>
<dbReference type="PANTHER" id="PTHR10122:SF20">
    <property type="entry name" value="CYTOCHROME C OXIDASE SUBUNIT 5B, MITOCHONDRIAL"/>
    <property type="match status" value="1"/>
</dbReference>
<dbReference type="Pfam" id="PF01215">
    <property type="entry name" value="COX5B"/>
    <property type="match status" value="1"/>
</dbReference>
<dbReference type="SUPFAM" id="SSF57802">
    <property type="entry name" value="Rubredoxin-like"/>
    <property type="match status" value="1"/>
</dbReference>
<dbReference type="PROSITE" id="PS00848">
    <property type="entry name" value="COX5B_1"/>
    <property type="match status" value="1"/>
</dbReference>
<dbReference type="PROSITE" id="PS51359">
    <property type="entry name" value="COX5B_2"/>
    <property type="match status" value="1"/>
</dbReference>
<sequence length="128" mass="14004">MKRGSAALEVRELKMQTPTASCVLSTQRANFAKGGVPTDDEQATGLEREVMMAARKGLDPYNILAPKAAAGTKEDPNLVPSITNKRIVGCICEEDNSTVIWFWLHKGEAQRCPSCGTHYKLVPHQLAH</sequence>
<gene>
    <name evidence="1" type="primary">COX5B</name>
    <name evidence="9" type="synonym">SP8</name>
</gene>
<protein>
    <recommendedName>
        <fullName evidence="1">Cytochrome c oxidase subunit 5B, mitochondrial</fullName>
    </recommendedName>
    <alternativeName>
        <fullName evidence="7">Cytochrome c oxidase polypeptide Vb</fullName>
    </alternativeName>
    <alternativeName>
        <fullName evidence="9">Sperm protein 8</fullName>
    </alternativeName>
    <alternativeName>
        <fullName evidence="7">fSP8</fullName>
    </alternativeName>
</protein>
<keyword id="KW-0007">Acetylation</keyword>
<keyword id="KW-0903">Direct protein sequencing</keyword>
<keyword id="KW-0472">Membrane</keyword>
<keyword id="KW-0479">Metal-binding</keyword>
<keyword id="KW-0496">Mitochondrion</keyword>
<keyword id="KW-0999">Mitochondrion inner membrane</keyword>
<keyword id="KW-1185">Reference proteome</keyword>
<keyword id="KW-0809">Transit peptide</keyword>
<keyword id="KW-0862">Zinc</keyword>
<organism>
    <name type="scientific">Vulpes vulpes</name>
    <name type="common">Red fox</name>
    <dbReference type="NCBI Taxonomy" id="9627"/>
    <lineage>
        <taxon>Eukaryota</taxon>
        <taxon>Metazoa</taxon>
        <taxon>Chordata</taxon>
        <taxon>Craniata</taxon>
        <taxon>Vertebrata</taxon>
        <taxon>Euteleostomi</taxon>
        <taxon>Mammalia</taxon>
        <taxon>Eutheria</taxon>
        <taxon>Laurasiatheria</taxon>
        <taxon>Carnivora</taxon>
        <taxon>Caniformia</taxon>
        <taxon>Canidae</taxon>
        <taxon>Vulpes</taxon>
    </lineage>
</organism>
<reference evidence="8 9" key="1">
    <citation type="journal article" date="2005" name="J. Androl.">
        <title>Cloning and sequencing of cDNA encoding for the testis-specific fox (Vulpes vulpes) sperm polypeptide Vb of the cytochrome C oxidase.</title>
        <authorList>
            <person name="Verdier Y."/>
            <person name="Farre G."/>
            <person name="Rouet N."/>
            <person name="Kele Z."/>
            <person name="Janaky T."/>
            <person name="Boue F."/>
            <person name="Borregaard N."/>
            <person name="Kjeldsen L."/>
        </authorList>
    </citation>
    <scope>NUCLEOTIDE SEQUENCE [MRNA]</scope>
    <scope>PROTEIN SEQUENCE OF 31-44</scope>
    <scope>TISSUE SPECIFICITY</scope>
    <scope>IDENTIFICATION BY MASS SPECTROMETRY</scope>
    <source>
        <tissue evidence="9">Testis</tissue>
    </source>
</reference>
<reference evidence="8" key="2">
    <citation type="journal article" date="2002" name="J. Androl.">
        <title>Partial characterization of antigenic sperm proteins in foxes (Vulpes vulpes).</title>
        <authorList>
            <person name="Verdier Y."/>
            <person name="Rouet N."/>
            <person name="Artois M."/>
            <person name="Boue F."/>
        </authorList>
    </citation>
    <scope>IDENTIFICATION BY 2D-PAGE</scope>
</reference>
<feature type="transit peptide" description="Mitochondrion" evidence="6">
    <location>
        <begin position="1"/>
        <end position="30"/>
    </location>
</feature>
<feature type="chain" id="PRO_0000395876" description="Cytochrome c oxidase subunit 5B, mitochondrial" evidence="6">
    <location>
        <begin position="31"/>
        <end position="128"/>
    </location>
</feature>
<feature type="binding site" evidence="1 4">
    <location>
        <position position="90"/>
    </location>
    <ligand>
        <name>Zn(2+)</name>
        <dbReference type="ChEBI" id="CHEBI:29105"/>
    </ligand>
</feature>
<feature type="binding site" evidence="1 4">
    <location>
        <position position="92"/>
    </location>
    <ligand>
        <name>Zn(2+)</name>
        <dbReference type="ChEBI" id="CHEBI:29105"/>
    </ligand>
</feature>
<feature type="binding site" evidence="1 4">
    <location>
        <position position="112"/>
    </location>
    <ligand>
        <name>Zn(2+)</name>
        <dbReference type="ChEBI" id="CHEBI:29105"/>
    </ligand>
</feature>
<feature type="binding site" evidence="1 4">
    <location>
        <position position="115"/>
    </location>
    <ligand>
        <name>Zn(2+)</name>
        <dbReference type="ChEBI" id="CHEBI:29105"/>
    </ligand>
</feature>
<feature type="modified residue" description="N6-acetyllysine" evidence="2">
    <location>
        <position position="67"/>
    </location>
</feature>
<feature type="modified residue" description="N6-acetyllysine" evidence="2">
    <location>
        <position position="85"/>
    </location>
</feature>
<feature type="modified residue" description="N6-acetyllysine" evidence="2">
    <location>
        <position position="120"/>
    </location>
</feature>
<feature type="sequence conflict" description="In Ref. 1; AA sequence." evidence="8" ref="1">
    <original>F</original>
    <variation>A</variation>
    <location>
        <position position="31"/>
    </location>
</feature>
<feature type="sequence conflict" description="In Ref. 1; AA sequence." evidence="8" ref="1">
    <original>K</original>
    <variation>G</variation>
    <location>
        <position position="33"/>
    </location>
</feature>
<comment type="function">
    <text evidence="1 4">This protein is one of the nuclear-coded polypeptide chains of cytochrome c oxidase, the terminal oxidase in mitochondrial electron transport.</text>
</comment>
<comment type="subcellular location">
    <subcellularLocation>
        <location evidence="1 4">Mitochondrion inner membrane</location>
    </subcellularLocation>
</comment>
<comment type="tissue specificity">
    <text evidence="6">Expressed in testis. Not expressed in brain, heart, liver, kidney, spleen, lung, duodenum, muscle, epididymis, vagina, uterus and ovary.</text>
</comment>
<comment type="miscellaneous">
    <text evidence="5">On the 2D-gel the determined pI of this protein is: 6.0, its MW is: 14.7 kDa.</text>
</comment>
<comment type="similarity">
    <text evidence="3">Belongs to the cytochrome c oxidase 5b family.</text>
</comment>